<name>SAHH_PSEAB</name>
<reference key="1">
    <citation type="journal article" date="2006" name="Genome Biol.">
        <title>Genomic analysis reveals that Pseudomonas aeruginosa virulence is combinatorial.</title>
        <authorList>
            <person name="Lee D.G."/>
            <person name="Urbach J.M."/>
            <person name="Wu G."/>
            <person name="Liberati N.T."/>
            <person name="Feinbaum R.L."/>
            <person name="Miyata S."/>
            <person name="Diggins L.T."/>
            <person name="He J."/>
            <person name="Saucier M."/>
            <person name="Deziel E."/>
            <person name="Friedman L."/>
            <person name="Li L."/>
            <person name="Grills G."/>
            <person name="Montgomery K."/>
            <person name="Kucherlapati R."/>
            <person name="Rahme L.G."/>
            <person name="Ausubel F.M."/>
        </authorList>
    </citation>
    <scope>NUCLEOTIDE SEQUENCE [LARGE SCALE GENOMIC DNA]</scope>
    <source>
        <strain>UCBPP-PA14</strain>
    </source>
</reference>
<comment type="function">
    <text evidence="1">May play a key role in the regulation of the intracellular concentration of adenosylhomocysteine.</text>
</comment>
<comment type="catalytic activity">
    <reaction evidence="1">
        <text>S-adenosyl-L-homocysteine + H2O = L-homocysteine + adenosine</text>
        <dbReference type="Rhea" id="RHEA:21708"/>
        <dbReference type="ChEBI" id="CHEBI:15377"/>
        <dbReference type="ChEBI" id="CHEBI:16335"/>
        <dbReference type="ChEBI" id="CHEBI:57856"/>
        <dbReference type="ChEBI" id="CHEBI:58199"/>
        <dbReference type="EC" id="3.13.2.1"/>
    </reaction>
</comment>
<comment type="cofactor">
    <cofactor evidence="1">
        <name>NAD(+)</name>
        <dbReference type="ChEBI" id="CHEBI:57540"/>
    </cofactor>
    <text evidence="1">Binds 1 NAD(+) per subunit.</text>
</comment>
<comment type="pathway">
    <text evidence="1">Amino-acid biosynthesis; L-homocysteine biosynthesis; L-homocysteine from S-adenosyl-L-homocysteine: step 1/1.</text>
</comment>
<comment type="subcellular location">
    <subcellularLocation>
        <location evidence="1">Cytoplasm</location>
    </subcellularLocation>
</comment>
<comment type="similarity">
    <text evidence="1">Belongs to the adenosylhomocysteinase family.</text>
</comment>
<protein>
    <recommendedName>
        <fullName evidence="1">Adenosylhomocysteinase</fullName>
        <ecNumber evidence="1">3.13.2.1</ecNumber>
    </recommendedName>
    <alternativeName>
        <fullName evidence="1">S-adenosyl-L-homocysteine hydrolase</fullName>
        <shortName evidence="1">AdoHcyase</shortName>
    </alternativeName>
</protein>
<proteinExistence type="inferred from homology"/>
<gene>
    <name evidence="1" type="primary">ahcY</name>
    <name type="ordered locus">PA14_05620</name>
</gene>
<feature type="chain" id="PRO_1000024748" description="Adenosylhomocysteinase">
    <location>
        <begin position="1"/>
        <end position="469"/>
    </location>
</feature>
<feature type="binding site" evidence="1">
    <location>
        <position position="63"/>
    </location>
    <ligand>
        <name>substrate</name>
    </ligand>
</feature>
<feature type="binding site" evidence="1">
    <location>
        <position position="139"/>
    </location>
    <ligand>
        <name>substrate</name>
    </ligand>
</feature>
<feature type="binding site" evidence="1">
    <location>
        <position position="164"/>
    </location>
    <ligand>
        <name>substrate</name>
    </ligand>
</feature>
<feature type="binding site" evidence="1">
    <location>
        <begin position="165"/>
        <end position="167"/>
    </location>
    <ligand>
        <name>NAD(+)</name>
        <dbReference type="ChEBI" id="CHEBI:57540"/>
    </ligand>
</feature>
<feature type="binding site" evidence="1">
    <location>
        <position position="194"/>
    </location>
    <ligand>
        <name>substrate</name>
    </ligand>
</feature>
<feature type="binding site" evidence="1">
    <location>
        <position position="198"/>
    </location>
    <ligand>
        <name>substrate</name>
    </ligand>
</feature>
<feature type="binding site" evidence="1">
    <location>
        <position position="199"/>
    </location>
    <ligand>
        <name>NAD(+)</name>
        <dbReference type="ChEBI" id="CHEBI:57540"/>
    </ligand>
</feature>
<feature type="binding site" evidence="1">
    <location>
        <begin position="228"/>
        <end position="233"/>
    </location>
    <ligand>
        <name>NAD(+)</name>
        <dbReference type="ChEBI" id="CHEBI:57540"/>
    </ligand>
</feature>
<feature type="binding site" evidence="1">
    <location>
        <position position="251"/>
    </location>
    <ligand>
        <name>NAD(+)</name>
        <dbReference type="ChEBI" id="CHEBI:57540"/>
    </ligand>
</feature>
<feature type="binding site" evidence="1">
    <location>
        <position position="300"/>
    </location>
    <ligand>
        <name>NAD(+)</name>
        <dbReference type="ChEBI" id="CHEBI:57540"/>
    </ligand>
</feature>
<feature type="binding site" evidence="1">
    <location>
        <begin position="321"/>
        <end position="323"/>
    </location>
    <ligand>
        <name>NAD(+)</name>
        <dbReference type="ChEBI" id="CHEBI:57540"/>
    </ligand>
</feature>
<feature type="binding site" evidence="1">
    <location>
        <position position="375"/>
    </location>
    <ligand>
        <name>NAD(+)</name>
        <dbReference type="ChEBI" id="CHEBI:57540"/>
    </ligand>
</feature>
<evidence type="ECO:0000255" key="1">
    <source>
        <dbReference type="HAMAP-Rule" id="MF_00563"/>
    </source>
</evidence>
<organism>
    <name type="scientific">Pseudomonas aeruginosa (strain UCBPP-PA14)</name>
    <dbReference type="NCBI Taxonomy" id="208963"/>
    <lineage>
        <taxon>Bacteria</taxon>
        <taxon>Pseudomonadati</taxon>
        <taxon>Pseudomonadota</taxon>
        <taxon>Gammaproteobacteria</taxon>
        <taxon>Pseudomonadales</taxon>
        <taxon>Pseudomonadaceae</taxon>
        <taxon>Pseudomonas</taxon>
    </lineage>
</organism>
<dbReference type="EC" id="3.13.2.1" evidence="1"/>
<dbReference type="EMBL" id="CP000438">
    <property type="protein sequence ID" value="ABJ15399.1"/>
    <property type="molecule type" value="Genomic_DNA"/>
</dbReference>
<dbReference type="RefSeq" id="WP_004365056.1">
    <property type="nucleotide sequence ID" value="NZ_CP034244.1"/>
</dbReference>
<dbReference type="SMR" id="Q02TY0"/>
<dbReference type="KEGG" id="pau:PA14_05620"/>
<dbReference type="PseudoCAP" id="PA14_05620"/>
<dbReference type="HOGENOM" id="CLU_025194_2_1_6"/>
<dbReference type="BioCyc" id="PAER208963:G1G74-468-MONOMER"/>
<dbReference type="UniPathway" id="UPA00314">
    <property type="reaction ID" value="UER00076"/>
</dbReference>
<dbReference type="Proteomes" id="UP000000653">
    <property type="component" value="Chromosome"/>
</dbReference>
<dbReference type="GO" id="GO:0005829">
    <property type="term" value="C:cytosol"/>
    <property type="evidence" value="ECO:0007669"/>
    <property type="project" value="TreeGrafter"/>
</dbReference>
<dbReference type="GO" id="GO:0004013">
    <property type="term" value="F:adenosylhomocysteinase activity"/>
    <property type="evidence" value="ECO:0007669"/>
    <property type="project" value="UniProtKB-UniRule"/>
</dbReference>
<dbReference type="GO" id="GO:0071269">
    <property type="term" value="P:L-homocysteine biosynthetic process"/>
    <property type="evidence" value="ECO:0007669"/>
    <property type="project" value="UniProtKB-UniRule"/>
</dbReference>
<dbReference type="GO" id="GO:0006730">
    <property type="term" value="P:one-carbon metabolic process"/>
    <property type="evidence" value="ECO:0007669"/>
    <property type="project" value="UniProtKB-KW"/>
</dbReference>
<dbReference type="GO" id="GO:0033353">
    <property type="term" value="P:S-adenosylmethionine cycle"/>
    <property type="evidence" value="ECO:0007669"/>
    <property type="project" value="TreeGrafter"/>
</dbReference>
<dbReference type="CDD" id="cd00401">
    <property type="entry name" value="SAHH"/>
    <property type="match status" value="1"/>
</dbReference>
<dbReference type="FunFam" id="3.40.50.1480:FF:000006">
    <property type="entry name" value="Adenosylhomocysteinase"/>
    <property type="match status" value="1"/>
</dbReference>
<dbReference type="FunFam" id="3.40.50.1480:FF:000007">
    <property type="entry name" value="Adenosylhomocysteinase"/>
    <property type="match status" value="1"/>
</dbReference>
<dbReference type="FunFam" id="3.40.50.1480:FF:000013">
    <property type="entry name" value="Adenosylhomocysteinase"/>
    <property type="match status" value="1"/>
</dbReference>
<dbReference type="FunFam" id="3.40.50.720:FF:000155">
    <property type="entry name" value="Adenosylhomocysteinase"/>
    <property type="match status" value="1"/>
</dbReference>
<dbReference type="Gene3D" id="3.40.50.1480">
    <property type="entry name" value="Adenosylhomocysteinase-like"/>
    <property type="match status" value="3"/>
</dbReference>
<dbReference type="Gene3D" id="3.40.50.720">
    <property type="entry name" value="NAD(P)-binding Rossmann-like Domain"/>
    <property type="match status" value="1"/>
</dbReference>
<dbReference type="HAMAP" id="MF_00563">
    <property type="entry name" value="AdoHcyase"/>
    <property type="match status" value="1"/>
</dbReference>
<dbReference type="InterPro" id="IPR042172">
    <property type="entry name" value="Adenosylhomocyst_ase-like_sf"/>
</dbReference>
<dbReference type="InterPro" id="IPR000043">
    <property type="entry name" value="Adenosylhomocysteinase-like"/>
</dbReference>
<dbReference type="InterPro" id="IPR015878">
    <property type="entry name" value="Ado_hCys_hydrolase_NAD-bd"/>
</dbReference>
<dbReference type="InterPro" id="IPR036291">
    <property type="entry name" value="NAD(P)-bd_dom_sf"/>
</dbReference>
<dbReference type="InterPro" id="IPR020082">
    <property type="entry name" value="S-Ado-L-homoCys_hydrolase_CS"/>
</dbReference>
<dbReference type="NCBIfam" id="TIGR00936">
    <property type="entry name" value="ahcY"/>
    <property type="match status" value="1"/>
</dbReference>
<dbReference type="NCBIfam" id="NF004005">
    <property type="entry name" value="PRK05476.2-3"/>
    <property type="match status" value="1"/>
</dbReference>
<dbReference type="PANTHER" id="PTHR23420">
    <property type="entry name" value="ADENOSYLHOMOCYSTEINASE"/>
    <property type="match status" value="1"/>
</dbReference>
<dbReference type="PANTHER" id="PTHR23420:SF0">
    <property type="entry name" value="ADENOSYLHOMOCYSTEINASE"/>
    <property type="match status" value="1"/>
</dbReference>
<dbReference type="Pfam" id="PF05221">
    <property type="entry name" value="AdoHcyase"/>
    <property type="match status" value="1"/>
</dbReference>
<dbReference type="Pfam" id="PF00670">
    <property type="entry name" value="AdoHcyase_NAD"/>
    <property type="match status" value="1"/>
</dbReference>
<dbReference type="PIRSF" id="PIRSF001109">
    <property type="entry name" value="Ad_hcy_hydrolase"/>
    <property type="match status" value="1"/>
</dbReference>
<dbReference type="SMART" id="SM00996">
    <property type="entry name" value="AdoHcyase"/>
    <property type="match status" value="1"/>
</dbReference>
<dbReference type="SMART" id="SM00997">
    <property type="entry name" value="AdoHcyase_NAD"/>
    <property type="match status" value="1"/>
</dbReference>
<dbReference type="SUPFAM" id="SSF52283">
    <property type="entry name" value="Formate/glycerate dehydrogenase catalytic domain-like"/>
    <property type="match status" value="1"/>
</dbReference>
<dbReference type="SUPFAM" id="SSF51735">
    <property type="entry name" value="NAD(P)-binding Rossmann-fold domains"/>
    <property type="match status" value="1"/>
</dbReference>
<dbReference type="PROSITE" id="PS00738">
    <property type="entry name" value="ADOHCYASE_1"/>
    <property type="match status" value="1"/>
</dbReference>
<dbReference type="PROSITE" id="PS00739">
    <property type="entry name" value="ADOHCYASE_2"/>
    <property type="match status" value="1"/>
</dbReference>
<accession>Q02TY0</accession>
<sequence length="469" mass="51426">MSAVMTPAGFTDYKVADITLAAWGRRELIIAESEMPALMGLRRKYAGQQPLKGAKILGCIHMTIQTGVLIETLVALGAEVRWSSCNIFSTQDQAAAAIAAAGIPVFAWKGETEEEYEWCIEQTILKDGQPWDANMVLDDGGDLTEILHKKYPQMLERIHGITEETTTGVHRLLDMLKNGTLKVPAINVNDSVTKSKNDNKYGCRHSLNDAIKRGTDHLLSGKQALVIGYGDVGKGSSQSLRQEGMIVKVAEVDPICAMQACMDGFEVVSPYKNGINDGTEASIDAALLGKIDLIVTTTGNVNVCDANMLKALKKRAVVCNIGHFDNEIDTAFMRKNWAWEEVKPQVHKIHRTGKDGFDAYNDDYLILLAEGRLVNLGNATGHPSRIMDGSFANQVLAQIHLFEQKYADLPAAEKAKRLSVEVLPKKLDEEVALEMVKGFGGVVTQLTPKQAEYIGVSVEGPFKPDTYRY</sequence>
<keyword id="KW-0963">Cytoplasm</keyword>
<keyword id="KW-0378">Hydrolase</keyword>
<keyword id="KW-0520">NAD</keyword>
<keyword id="KW-0554">One-carbon metabolism</keyword>